<keyword id="KW-0025">Alternative splicing</keyword>
<keyword id="KW-0217">Developmental protein</keyword>
<keyword id="KW-0238">DNA-binding</keyword>
<keyword id="KW-0539">Nucleus</keyword>
<keyword id="KW-0597">Phosphoprotein</keyword>
<keyword id="KW-1185">Reference proteome</keyword>
<keyword id="KW-0677">Repeat</keyword>
<keyword id="KW-0804">Transcription</keyword>
<keyword id="KW-0805">Transcription regulation</keyword>
<accession>Q24119</accession>
<accession>A8JNH0</accession>
<accession>A8WHG8</accession>
<accession>Q0E8K2</accession>
<accession>Q24165</accession>
<accession>Q8SX13</accession>
<accession>Q9W0Q7</accession>
<comment type="function">
    <text evidence="5 7 8 9">Transcription factor, master regulator of tracheal cell fates in the embryo, necessary for the development of the salivary gland duct, Malpighian tubules and the posterior spiracles (PubMed:10502111, PubMed:8557189, PubMed:8557198, PubMed:9374395). It may induce a general fate of branched tubular structures of epithelial origin (PubMed:10502111, PubMed:8557189, PubMed:8557198). Functions with tgo to regulate expression of btl (PubMed:9374395).</text>
</comment>
<comment type="subunit">
    <text>Efficient DNA binding requires dimerization with another bHLH protein. Heterodimer with tgo.</text>
</comment>
<comment type="subcellular location">
    <subcellularLocation>
        <location evidence="3 6">Nucleus</location>
    </subcellularLocation>
</comment>
<comment type="alternative products">
    <event type="alternative splicing"/>
    <isoform>
        <id>Q24119-5</id>
        <name>D</name>
        <sequence type="displayed"/>
    </isoform>
    <isoform>
        <id>Q24119-1</id>
        <name>A</name>
        <sequence type="described" ref="VSP_043934"/>
    </isoform>
    <isoform>
        <id>Q24119-3</id>
        <name>B</name>
        <sequence type="described" ref="VSP_043933 VSP_043934"/>
    </isoform>
    <isoform>
        <id>Q24119-6</id>
        <name>C</name>
        <sequence type="described" ref="VSP_043931 VSP_043933 VSP_043934"/>
    </isoform>
    <isoform>
        <id>Q24119-2</id>
        <name>E</name>
        <sequence type="described" ref="VSP_043932 VSP_043934"/>
    </isoform>
</comment>
<comment type="tissue specificity">
    <text evidence="7 8">Trachea, salivary gland ducts, posterior spiracles (Filzkoeper primordia) and a subset of cells in the CNS.</text>
</comment>
<comment type="developmental stage">
    <text evidence="8">During embryogenesis, first detected in the tracheal placodes at stage 8, and expression continues throughout embryonic and larval development. In the developing salivary gland, expression is observed in the entire gland at stage 9 and by stage 12, expression is confined to the salivary ducts.</text>
</comment>
<comment type="PTM">
    <text evidence="6">Ser-673 phosphorylation by PKB/Akt1 is required for nuclear targeting and transcriptional activity.</text>
</comment>
<comment type="disruption phenotype">
    <text evidence="5 7">Tube-forming cells of the salivary gland, trachea, and filzkorper fail to invaginate to form tubes and remain on the embryo surface (PubMed:8557189). In embryo Malpighian tubules, cell rearrangement is incomplete and the resulting tubules are wider than normal (PubMed:10502111).</text>
</comment>
<comment type="miscellaneous">
    <text>Readthrough of the terminator UGA may occur between the codons for 958-Ser and 960-Val.</text>
</comment>
<comment type="sequence caution" evidence="14">
    <conflict type="erroneous initiation">
        <sequence resource="EMBL-CDS" id="AAA96257"/>
    </conflict>
    <text>Truncated N-terminus.</text>
</comment>
<comment type="sequence caution" evidence="14">
    <conflict type="frameshift">
        <sequence resource="EMBL-CDS" id="AAA96754"/>
    </conflict>
</comment>
<comment type="sequence caution" evidence="14">
    <conflict type="erroneous initiation">
        <sequence resource="EMBL-CDS" id="AAM11264"/>
    </conflict>
    <text>Truncated N-terminus.</text>
</comment>
<feature type="chain" id="PRO_0000127476" description="Protein trachealess">
    <location>
        <begin position="1"/>
        <end position="1022"/>
    </location>
</feature>
<feature type="domain" description="bHLH" evidence="3">
    <location>
        <begin position="86"/>
        <end position="139"/>
    </location>
</feature>
<feature type="domain" description="PAS 1" evidence="2">
    <location>
        <begin position="174"/>
        <end position="244"/>
    </location>
</feature>
<feature type="domain" description="PAS 2" evidence="2">
    <location>
        <begin position="391"/>
        <end position="461"/>
    </location>
</feature>
<feature type="domain" description="PAC">
    <location>
        <begin position="465"/>
        <end position="508"/>
    </location>
</feature>
<feature type="region of interest" description="Disordered" evidence="4">
    <location>
        <begin position="239"/>
        <end position="289"/>
    </location>
</feature>
<feature type="region of interest" description="Disordered" evidence="4">
    <location>
        <begin position="525"/>
        <end position="686"/>
    </location>
</feature>
<feature type="region of interest" description="Disordered" evidence="4">
    <location>
        <begin position="849"/>
        <end position="896"/>
    </location>
</feature>
<feature type="region of interest" description="Disordered" evidence="4">
    <location>
        <begin position="962"/>
        <end position="996"/>
    </location>
</feature>
<feature type="short sequence motif" description="Nuclear localization signal" evidence="1">
    <location>
        <begin position="629"/>
        <end position="636"/>
    </location>
</feature>
<feature type="compositionally biased region" description="Gly residues" evidence="4">
    <location>
        <begin position="243"/>
        <end position="265"/>
    </location>
</feature>
<feature type="compositionally biased region" description="Polar residues" evidence="4">
    <location>
        <begin position="280"/>
        <end position="289"/>
    </location>
</feature>
<feature type="compositionally biased region" description="Low complexity" evidence="4">
    <location>
        <begin position="578"/>
        <end position="587"/>
    </location>
</feature>
<feature type="compositionally biased region" description="Low complexity" evidence="4">
    <location>
        <begin position="611"/>
        <end position="625"/>
    </location>
</feature>
<feature type="compositionally biased region" description="Polar residues" evidence="4">
    <location>
        <begin position="851"/>
        <end position="864"/>
    </location>
</feature>
<feature type="compositionally biased region" description="Low complexity" evidence="4">
    <location>
        <begin position="987"/>
        <end position="996"/>
    </location>
</feature>
<feature type="modified residue" description="Phosphoserine; by PKB/Akt1" evidence="6">
    <location>
        <position position="673"/>
    </location>
</feature>
<feature type="splice variant" id="VSP_043931" description="In isoform C." evidence="14">
    <original>LPYQAAVAMDYAGYQRQPTPGHPGSHMATMGSLGMPAVPFTHSWMVPTQDLCAMPPYNKMTGHQQPPGAGMHAQQQPLEPG</original>
    <variation>EHHGSGFVASPWAAVLGHHSMASDAGFAAAAAAAHVQNHSMHHPIHSHHHHHSHSHPHPHPHSHPHHHPHLGTAGGMPMDLHVPQGFPYYRYREDALCWGDRKSMEEIGAAQSSVNAR</variation>
    <location>
        <begin position="2"/>
        <end position="82"/>
    </location>
</feature>
<feature type="splice variant" id="VSP_043932" description="In isoform E." evidence="12">
    <location>
        <begin position="281"/>
        <end position="286"/>
    </location>
</feature>
<feature type="splice variant" id="VSP_043933" description="In isoform B and isoform C." evidence="10 12 13">
    <location>
        <begin position="328"/>
        <end position="356"/>
    </location>
</feature>
<feature type="splice variant" id="VSP_043934" description="In isoform A, isoform B, isoform C and isoform E." evidence="10 11 12 13">
    <location>
        <begin position="959"/>
        <end position="1022"/>
    </location>
</feature>
<feature type="mutagenesis site" description="Malpighian tubules empty into a single large sack that is attached to the hindgut and no ureters are evident. Distal segments of the tubules are tubular but fail to elongate or undergo cell rearrangement, resulting in tubules that are shorter and wider than normal. Hindguts are normal in shape but shortened." evidence="5">
    <original>I</original>
    <variation>N</variation>
    <location>
        <position position="233"/>
    </location>
</feature>
<feature type="mutagenesis site" description="No effect on phosphorylation by Akt1; no effect on transcriptional activity." evidence="6">
    <original>S</original>
    <variation>A</variation>
    <location>
        <position position="579"/>
    </location>
</feature>
<feature type="mutagenesis site" description="Abolishes phosphorylation by Akt1, nuclear localization, and transcriptional activity." evidence="6">
    <original>S</original>
    <variation>A</variation>
    <location>
        <position position="673"/>
    </location>
</feature>
<feature type="mutagenesis site" description="Slightly increases transcriptional activity." evidence="6">
    <original>S</original>
    <variation>D</variation>
    <location>
        <position position="673"/>
    </location>
</feature>
<feature type="sequence conflict" description="In Ref. 1; AAA96257." evidence="14" ref="1">
    <original>P</original>
    <variation>A</variation>
    <location>
        <position position="78"/>
    </location>
</feature>
<feature type="sequence conflict" description="In Ref. 2; AAA96754." evidence="14" ref="2">
    <original>G</original>
    <variation>GG</variation>
    <location>
        <position position="250"/>
    </location>
</feature>
<feature type="sequence conflict" description="In Ref. 5; ABX00736." evidence="14" ref="5">
    <original>S</original>
    <variation>P</variation>
    <location>
        <position position="627"/>
    </location>
</feature>
<feature type="sequence conflict" description="In Ref. 1; AAA96257." evidence="14" ref="1">
    <original>A</original>
    <variation>T</variation>
    <location>
        <position position="703"/>
    </location>
</feature>
<feature type="sequence conflict" description="In Ref. 1; AAA96257." evidence="14" ref="1">
    <original>A</original>
    <variation>P</variation>
    <location>
        <position position="708"/>
    </location>
</feature>
<feature type="sequence conflict" description="In Ref. 1; AAA96257." evidence="14" ref="1">
    <original>A</original>
    <variation>V</variation>
    <location>
        <position position="829"/>
    </location>
</feature>
<protein>
    <recommendedName>
        <fullName>Protein trachealess</fullName>
    </recommendedName>
</protein>
<evidence type="ECO:0000255" key="1"/>
<evidence type="ECO:0000255" key="2">
    <source>
        <dbReference type="PROSITE-ProRule" id="PRU00140"/>
    </source>
</evidence>
<evidence type="ECO:0000255" key="3">
    <source>
        <dbReference type="PROSITE-ProRule" id="PRU00981"/>
    </source>
</evidence>
<evidence type="ECO:0000256" key="4">
    <source>
        <dbReference type="SAM" id="MobiDB-lite"/>
    </source>
</evidence>
<evidence type="ECO:0000269" key="5">
    <source>
    </source>
</evidence>
<evidence type="ECO:0000269" key="6">
    <source>
    </source>
</evidence>
<evidence type="ECO:0000269" key="7">
    <source>
    </source>
</evidence>
<evidence type="ECO:0000269" key="8">
    <source>
    </source>
</evidence>
<evidence type="ECO:0000269" key="9">
    <source>
    </source>
</evidence>
<evidence type="ECO:0000303" key="10">
    <source>
    </source>
</evidence>
<evidence type="ECO:0000303" key="11">
    <source>
    </source>
</evidence>
<evidence type="ECO:0000303" key="12">
    <source>
    </source>
</evidence>
<evidence type="ECO:0000303" key="13">
    <source ref="5"/>
</evidence>
<evidence type="ECO:0000305" key="14"/>
<proteinExistence type="evidence at protein level"/>
<reference key="1">
    <citation type="journal article" date="1996" name="Genes Dev.">
        <title>Trachealess encodes a bHLH-PAS protein that is an inducer of tracheal cell fates in Drosophila.</title>
        <authorList>
            <person name="Wilk R."/>
            <person name="Weizman I."/>
            <person name="Shilo B.-Z."/>
        </authorList>
    </citation>
    <scope>NUCLEOTIDE SEQUENCE [MRNA] (ISOFORMS A; B AND E)</scope>
    <scope>FUNCTION</scope>
    <scope>TISSUE SPECIFICITY</scope>
    <scope>DEVELOPMENTAL STAGE</scope>
    <source>
        <tissue>Embryo</tissue>
    </source>
</reference>
<reference key="2">
    <citation type="journal article" date="1996" name="Genes Dev.">
        <title>Tubulogenesis in Drosophila: a requirement for the trachealess gene product.</title>
        <authorList>
            <person name="Isaac D.D."/>
            <person name="Andrew D.J."/>
        </authorList>
    </citation>
    <scope>NUCLEOTIDE SEQUENCE [MRNA] (ISOFORM A)</scope>
    <scope>FUNCTION</scope>
    <scope>TISSUE SPECIFICITY</scope>
    <scope>DISRUPTION PHENOTYPE</scope>
    <source>
        <tissue>Embryo</tissue>
    </source>
</reference>
<reference key="3">
    <citation type="journal article" date="2000" name="Science">
        <title>The genome sequence of Drosophila melanogaster.</title>
        <authorList>
            <person name="Adams M.D."/>
            <person name="Celniker S.E."/>
            <person name="Holt R.A."/>
            <person name="Evans C.A."/>
            <person name="Gocayne J.D."/>
            <person name="Amanatides P.G."/>
            <person name="Scherer S.E."/>
            <person name="Li P.W."/>
            <person name="Hoskins R.A."/>
            <person name="Galle R.F."/>
            <person name="George R.A."/>
            <person name="Lewis S.E."/>
            <person name="Richards S."/>
            <person name="Ashburner M."/>
            <person name="Henderson S.N."/>
            <person name="Sutton G.G."/>
            <person name="Wortman J.R."/>
            <person name="Yandell M.D."/>
            <person name="Zhang Q."/>
            <person name="Chen L.X."/>
            <person name="Brandon R.C."/>
            <person name="Rogers Y.-H.C."/>
            <person name="Blazej R.G."/>
            <person name="Champe M."/>
            <person name="Pfeiffer B.D."/>
            <person name="Wan K.H."/>
            <person name="Doyle C."/>
            <person name="Baxter E.G."/>
            <person name="Helt G."/>
            <person name="Nelson C.R."/>
            <person name="Miklos G.L.G."/>
            <person name="Abril J.F."/>
            <person name="Agbayani A."/>
            <person name="An H.-J."/>
            <person name="Andrews-Pfannkoch C."/>
            <person name="Baldwin D."/>
            <person name="Ballew R.M."/>
            <person name="Basu A."/>
            <person name="Baxendale J."/>
            <person name="Bayraktaroglu L."/>
            <person name="Beasley E.M."/>
            <person name="Beeson K.Y."/>
            <person name="Benos P.V."/>
            <person name="Berman B.P."/>
            <person name="Bhandari D."/>
            <person name="Bolshakov S."/>
            <person name="Borkova D."/>
            <person name="Botchan M.R."/>
            <person name="Bouck J."/>
            <person name="Brokstein P."/>
            <person name="Brottier P."/>
            <person name="Burtis K.C."/>
            <person name="Busam D.A."/>
            <person name="Butler H."/>
            <person name="Cadieu E."/>
            <person name="Center A."/>
            <person name="Chandra I."/>
            <person name="Cherry J.M."/>
            <person name="Cawley S."/>
            <person name="Dahlke C."/>
            <person name="Davenport L.B."/>
            <person name="Davies P."/>
            <person name="de Pablos B."/>
            <person name="Delcher A."/>
            <person name="Deng Z."/>
            <person name="Mays A.D."/>
            <person name="Dew I."/>
            <person name="Dietz S.M."/>
            <person name="Dodson K."/>
            <person name="Doup L.E."/>
            <person name="Downes M."/>
            <person name="Dugan-Rocha S."/>
            <person name="Dunkov B.C."/>
            <person name="Dunn P."/>
            <person name="Durbin K.J."/>
            <person name="Evangelista C.C."/>
            <person name="Ferraz C."/>
            <person name="Ferriera S."/>
            <person name="Fleischmann W."/>
            <person name="Fosler C."/>
            <person name="Gabrielian A.E."/>
            <person name="Garg N.S."/>
            <person name="Gelbart W.M."/>
            <person name="Glasser K."/>
            <person name="Glodek A."/>
            <person name="Gong F."/>
            <person name="Gorrell J.H."/>
            <person name="Gu Z."/>
            <person name="Guan P."/>
            <person name="Harris M."/>
            <person name="Harris N.L."/>
            <person name="Harvey D.A."/>
            <person name="Heiman T.J."/>
            <person name="Hernandez J.R."/>
            <person name="Houck J."/>
            <person name="Hostin D."/>
            <person name="Houston K.A."/>
            <person name="Howland T.J."/>
            <person name="Wei M.-H."/>
            <person name="Ibegwam C."/>
            <person name="Jalali M."/>
            <person name="Kalush F."/>
            <person name="Karpen G.H."/>
            <person name="Ke Z."/>
            <person name="Kennison J.A."/>
            <person name="Ketchum K.A."/>
            <person name="Kimmel B.E."/>
            <person name="Kodira C.D."/>
            <person name="Kraft C.L."/>
            <person name="Kravitz S."/>
            <person name="Kulp D."/>
            <person name="Lai Z."/>
            <person name="Lasko P."/>
            <person name="Lei Y."/>
            <person name="Levitsky A.A."/>
            <person name="Li J.H."/>
            <person name="Li Z."/>
            <person name="Liang Y."/>
            <person name="Lin X."/>
            <person name="Liu X."/>
            <person name="Mattei B."/>
            <person name="McIntosh T.C."/>
            <person name="McLeod M.P."/>
            <person name="McPherson D."/>
            <person name="Merkulov G."/>
            <person name="Milshina N.V."/>
            <person name="Mobarry C."/>
            <person name="Morris J."/>
            <person name="Moshrefi A."/>
            <person name="Mount S.M."/>
            <person name="Moy M."/>
            <person name="Murphy B."/>
            <person name="Murphy L."/>
            <person name="Muzny D.M."/>
            <person name="Nelson D.L."/>
            <person name="Nelson D.R."/>
            <person name="Nelson K.A."/>
            <person name="Nixon K."/>
            <person name="Nusskern D.R."/>
            <person name="Pacleb J.M."/>
            <person name="Palazzolo M."/>
            <person name="Pittman G.S."/>
            <person name="Pan S."/>
            <person name="Pollard J."/>
            <person name="Puri V."/>
            <person name="Reese M.G."/>
            <person name="Reinert K."/>
            <person name="Remington K."/>
            <person name="Saunders R.D.C."/>
            <person name="Scheeler F."/>
            <person name="Shen H."/>
            <person name="Shue B.C."/>
            <person name="Siden-Kiamos I."/>
            <person name="Simpson M."/>
            <person name="Skupski M.P."/>
            <person name="Smith T.J."/>
            <person name="Spier E."/>
            <person name="Spradling A.C."/>
            <person name="Stapleton M."/>
            <person name="Strong R."/>
            <person name="Sun E."/>
            <person name="Svirskas R."/>
            <person name="Tector C."/>
            <person name="Turner R."/>
            <person name="Venter E."/>
            <person name="Wang A.H."/>
            <person name="Wang X."/>
            <person name="Wang Z.-Y."/>
            <person name="Wassarman D.A."/>
            <person name="Weinstock G.M."/>
            <person name="Weissenbach J."/>
            <person name="Williams S.M."/>
            <person name="Woodage T."/>
            <person name="Worley K.C."/>
            <person name="Wu D."/>
            <person name="Yang S."/>
            <person name="Yao Q.A."/>
            <person name="Ye J."/>
            <person name="Yeh R.-F."/>
            <person name="Zaveri J.S."/>
            <person name="Zhan M."/>
            <person name="Zhang G."/>
            <person name="Zhao Q."/>
            <person name="Zheng L."/>
            <person name="Zheng X.H."/>
            <person name="Zhong F.N."/>
            <person name="Zhong W."/>
            <person name="Zhou X."/>
            <person name="Zhu S.C."/>
            <person name="Zhu X."/>
            <person name="Smith H.O."/>
            <person name="Gibbs R.A."/>
            <person name="Myers E.W."/>
            <person name="Rubin G.M."/>
            <person name="Venter J.C."/>
        </authorList>
    </citation>
    <scope>NUCLEOTIDE SEQUENCE [LARGE SCALE GENOMIC DNA]</scope>
    <source>
        <strain>Berkeley</strain>
    </source>
</reference>
<reference key="4">
    <citation type="journal article" date="2002" name="Genome Biol.">
        <title>Annotation of the Drosophila melanogaster euchromatic genome: a systematic review.</title>
        <authorList>
            <person name="Misra S."/>
            <person name="Crosby M.A."/>
            <person name="Mungall C.J."/>
            <person name="Matthews B.B."/>
            <person name="Campbell K.S."/>
            <person name="Hradecky P."/>
            <person name="Huang Y."/>
            <person name="Kaminker J.S."/>
            <person name="Millburn G.H."/>
            <person name="Prochnik S.E."/>
            <person name="Smith C.D."/>
            <person name="Tupy J.L."/>
            <person name="Whitfield E.J."/>
            <person name="Bayraktaroglu L."/>
            <person name="Berman B.P."/>
            <person name="Bettencourt B.R."/>
            <person name="Celniker S.E."/>
            <person name="de Grey A.D.N.J."/>
            <person name="Drysdale R.A."/>
            <person name="Harris N.L."/>
            <person name="Richter J."/>
            <person name="Russo S."/>
            <person name="Schroeder A.J."/>
            <person name="Shu S.Q."/>
            <person name="Stapleton M."/>
            <person name="Yamada C."/>
            <person name="Ashburner M."/>
            <person name="Gelbart W.M."/>
            <person name="Rubin G.M."/>
            <person name="Lewis S.E."/>
        </authorList>
    </citation>
    <scope>GENOME REANNOTATION</scope>
    <scope>ALTERNATIVE SPLICING</scope>
    <source>
        <strain>Berkeley</strain>
    </source>
</reference>
<reference key="5">
    <citation type="submission" date="2007-11" db="EMBL/GenBank/DDBJ databases">
        <authorList>
            <person name="Stapleton M."/>
            <person name="Carlson J.W."/>
            <person name="Frise E."/>
            <person name="Kapadia B."/>
            <person name="Park S."/>
            <person name="Wan K.H."/>
            <person name="Yu C."/>
            <person name="Celniker S.E."/>
        </authorList>
    </citation>
    <scope>NUCLEOTIDE SEQUENCE [LARGE SCALE MRNA] (ISOFORM B)</scope>
    <source>
        <strain>Berkeley</strain>
    </source>
</reference>
<reference key="6">
    <citation type="journal article" date="2002" name="Genome Biol.">
        <title>A Drosophila full-length cDNA resource.</title>
        <authorList>
            <person name="Stapleton M."/>
            <person name="Carlson J.W."/>
            <person name="Brokstein P."/>
            <person name="Yu C."/>
            <person name="Champe M."/>
            <person name="George R.A."/>
            <person name="Guarin H."/>
            <person name="Kronmiller B."/>
            <person name="Pacleb J.M."/>
            <person name="Park S."/>
            <person name="Wan K.H."/>
            <person name="Rubin G.M."/>
            <person name="Celniker S.E."/>
        </authorList>
    </citation>
    <scope>NUCLEOTIDE SEQUENCE [LARGE SCALE MRNA] OF 17-1022 (ISOFORM B)</scope>
    <source>
        <strain>Berkeley</strain>
        <tissue>Head</tissue>
    </source>
</reference>
<reference key="7">
    <citation type="journal article" date="1997" name="Development">
        <title>Transcriptional regulation of breathless FGF receptor gene by binding of TRACHEALESS/dARNT heterodimers to three central midline elements in Drosophila developing trachea.</title>
        <authorList>
            <person name="Ohshiro T."/>
            <person name="Saigo K."/>
        </authorList>
    </citation>
    <scope>FUNCTION</scope>
</reference>
<reference key="8">
    <citation type="journal article" date="1999" name="Dev. Genes Evol.">
        <title>Mutations that alter the morphology of the malpighian tubules in Drosophila.</title>
        <authorList>
            <person name="Jack J."/>
            <person name="Myette G."/>
        </authorList>
    </citation>
    <scope>FUNCTION</scope>
    <scope>DISRUPTION PHENOTYPE</scope>
    <scope>MUTAGENESIS OF ILE-233</scope>
</reference>
<reference key="9">
    <citation type="journal article" date="2001" name="Dev. Cell">
        <title>Regulation of Drosophila tracheal system development by protein kinase B.</title>
        <authorList>
            <person name="Jin J."/>
            <person name="Anthopoulos N."/>
            <person name="Wetsch B."/>
            <person name="Binari R.C."/>
            <person name="Isaac D.D."/>
            <person name="Andrew D.J."/>
            <person name="Woodgett J.R."/>
            <person name="Manoukian A.S."/>
        </authorList>
    </citation>
    <scope>PHOSPHORYLATION AT SER-673</scope>
    <scope>MUTAGENESIS OF SER-579 AND SER-673</scope>
    <scope>SUBCELLULAR LOCATION</scope>
</reference>
<reference key="10">
    <citation type="journal article" date="2011" name="Genome Res.">
        <title>Evidence of abundant stop codon readthrough in Drosophila and other metazoa.</title>
        <authorList>
            <person name="Jungreis I."/>
            <person name="Lin M.F."/>
            <person name="Spokony R."/>
            <person name="Chan C.S."/>
            <person name="Negre N."/>
            <person name="Victorsen A."/>
            <person name="White K.P."/>
            <person name="Kellis M."/>
        </authorList>
    </citation>
    <scope>READTHROUGH OF STOP CODON</scope>
</reference>
<gene>
    <name type="primary">trh</name>
    <name type="ORF">CG6883</name>
</gene>
<name>TRH_DROME</name>
<dbReference type="EMBL" id="U33427">
    <property type="protein sequence ID" value="AAA96257.1"/>
    <property type="status" value="ALT_INIT"/>
    <property type="molecule type" value="mRNA"/>
</dbReference>
<dbReference type="EMBL" id="U42699">
    <property type="protein sequence ID" value="AAA96754.1"/>
    <property type="status" value="ALT_FRAME"/>
    <property type="molecule type" value="mRNA"/>
</dbReference>
<dbReference type="EMBL" id="AE014296">
    <property type="protein sequence ID" value="AAF47386.1"/>
    <property type="molecule type" value="Genomic_DNA"/>
</dbReference>
<dbReference type="EMBL" id="AE014296">
    <property type="protein sequence ID" value="ABI31226.1"/>
    <property type="molecule type" value="Genomic_DNA"/>
</dbReference>
<dbReference type="EMBL" id="BT031114">
    <property type="protein sequence ID" value="ABX00736.1"/>
    <property type="molecule type" value="mRNA"/>
</dbReference>
<dbReference type="EMBL" id="AY094911">
    <property type="protein sequence ID" value="AAM11264.1"/>
    <property type="status" value="ALT_INIT"/>
    <property type="molecule type" value="mRNA"/>
</dbReference>
<dbReference type="RefSeq" id="NP_001036575.1">
    <molecule id="Q24119-3"/>
    <property type="nucleotide sequence ID" value="NM_001043110.2"/>
</dbReference>
<dbReference type="RefSeq" id="NP_001097461.2">
    <molecule id="Q24119-6"/>
    <property type="nucleotide sequence ID" value="NM_001103991.2"/>
</dbReference>
<dbReference type="RefSeq" id="NP_001261207.1">
    <molecule id="Q24119-5"/>
    <property type="nucleotide sequence ID" value="NM_001274278.1"/>
</dbReference>
<dbReference type="RefSeq" id="NP_001261208.1">
    <molecule id="Q24119-2"/>
    <property type="nucleotide sequence ID" value="NM_001274279.1"/>
</dbReference>
<dbReference type="RefSeq" id="NP_523872.2">
    <molecule id="Q24119-1"/>
    <property type="nucleotide sequence ID" value="NM_079148.3"/>
</dbReference>
<dbReference type="BioGRID" id="63620">
    <property type="interactions" value="8"/>
</dbReference>
<dbReference type="FunCoup" id="Q24119">
    <property type="interactions" value="281"/>
</dbReference>
<dbReference type="IntAct" id="Q24119">
    <property type="interactions" value="4"/>
</dbReference>
<dbReference type="STRING" id="7227.FBpp0303179"/>
<dbReference type="GlyGen" id="Q24119">
    <property type="glycosylation" value="4 sites"/>
</dbReference>
<dbReference type="iPTMnet" id="Q24119"/>
<dbReference type="PaxDb" id="7227-FBpp0306032"/>
<dbReference type="EnsemblMetazoa" id="FBtr0304120">
    <molecule id="Q24119-1"/>
    <property type="protein sequence ID" value="FBpp0293063"/>
    <property type="gene ID" value="FBgn0262139"/>
</dbReference>
<dbReference type="EnsemblMetazoa" id="FBtr0304121">
    <molecule id="Q24119-3"/>
    <property type="protein sequence ID" value="FBpp0293064"/>
    <property type="gene ID" value="FBgn0262139"/>
</dbReference>
<dbReference type="EnsemblMetazoa" id="FBtr0304122">
    <molecule id="Q24119-6"/>
    <property type="protein sequence ID" value="FBpp0293065"/>
    <property type="gene ID" value="FBgn0262139"/>
</dbReference>
<dbReference type="EnsemblMetazoa" id="FBtr0330146">
    <molecule id="Q24119-5"/>
    <property type="protein sequence ID" value="FBpp0303179"/>
    <property type="gene ID" value="FBgn0262139"/>
</dbReference>
<dbReference type="EnsemblMetazoa" id="FBtr0330147">
    <molecule id="Q24119-2"/>
    <property type="protein sequence ID" value="FBpp0303180"/>
    <property type="gene ID" value="FBgn0262139"/>
</dbReference>
<dbReference type="GeneID" id="38065"/>
<dbReference type="KEGG" id="dme:Dmel_CG42865"/>
<dbReference type="UCSC" id="CG6883-RB">
    <property type="organism name" value="d. melanogaster"/>
</dbReference>
<dbReference type="AGR" id="FB:FBgn0262139"/>
<dbReference type="CTD" id="7200"/>
<dbReference type="FlyBase" id="FBgn0262139">
    <property type="gene designation" value="trh"/>
</dbReference>
<dbReference type="VEuPathDB" id="VectorBase:FBgn0262139"/>
<dbReference type="eggNOG" id="KOG3558">
    <property type="taxonomic scope" value="Eukaryota"/>
</dbReference>
<dbReference type="GeneTree" id="ENSGT00940000174266"/>
<dbReference type="InParanoid" id="Q24119"/>
<dbReference type="OrthoDB" id="6021714at2759"/>
<dbReference type="PhylomeDB" id="Q24119"/>
<dbReference type="SignaLink" id="Q24119"/>
<dbReference type="BioGRID-ORCS" id="38065">
    <property type="hits" value="0 hits in 3 CRISPR screens"/>
</dbReference>
<dbReference type="ChiTaRS" id="Hn">
    <property type="organism name" value="fly"/>
</dbReference>
<dbReference type="GenomeRNAi" id="38065"/>
<dbReference type="PRO" id="PR:Q24119"/>
<dbReference type="Proteomes" id="UP000000803">
    <property type="component" value="Chromosome 3L"/>
</dbReference>
<dbReference type="Bgee" id="FBgn0262139">
    <property type="expression patterns" value="Expressed in adult tracheocyte (Drosophila) in insect leg and 46 other cell types or tissues"/>
</dbReference>
<dbReference type="ExpressionAtlas" id="Q24119">
    <property type="expression patterns" value="baseline and differential"/>
</dbReference>
<dbReference type="GO" id="GO:0005634">
    <property type="term" value="C:nucleus"/>
    <property type="evidence" value="ECO:0000314"/>
    <property type="project" value="FlyBase"/>
</dbReference>
<dbReference type="GO" id="GO:0003700">
    <property type="term" value="F:DNA-binding transcription factor activity"/>
    <property type="evidence" value="ECO:0000353"/>
    <property type="project" value="FlyBase"/>
</dbReference>
<dbReference type="GO" id="GO:0000981">
    <property type="term" value="F:DNA-binding transcription factor activity, RNA polymerase II-specific"/>
    <property type="evidence" value="ECO:0000250"/>
    <property type="project" value="FlyBase"/>
</dbReference>
<dbReference type="GO" id="GO:0046982">
    <property type="term" value="F:protein heterodimerization activity"/>
    <property type="evidence" value="ECO:0000353"/>
    <property type="project" value="FlyBase"/>
</dbReference>
<dbReference type="GO" id="GO:0000977">
    <property type="term" value="F:RNA polymerase II transcription regulatory region sequence-specific DNA binding"/>
    <property type="evidence" value="ECO:0000318"/>
    <property type="project" value="GO_Central"/>
</dbReference>
<dbReference type="GO" id="GO:0043565">
    <property type="term" value="F:sequence-specific DNA binding"/>
    <property type="evidence" value="ECO:0000314"/>
    <property type="project" value="FlyBase"/>
</dbReference>
<dbReference type="GO" id="GO:0048736">
    <property type="term" value="P:appendage development"/>
    <property type="evidence" value="ECO:0000315"/>
    <property type="project" value="FlyBase"/>
</dbReference>
<dbReference type="GO" id="GO:0007425">
    <property type="term" value="P:epithelial cell fate determination, open tracheal system"/>
    <property type="evidence" value="ECO:0000315"/>
    <property type="project" value="FlyBase"/>
</dbReference>
<dbReference type="GO" id="GO:0072175">
    <property type="term" value="P:epithelial tube formation"/>
    <property type="evidence" value="ECO:0000315"/>
    <property type="project" value="FlyBase"/>
</dbReference>
<dbReference type="GO" id="GO:0007443">
    <property type="term" value="P:Malpighian tubule morphogenesis"/>
    <property type="evidence" value="ECO:0000315"/>
    <property type="project" value="FlyBase"/>
</dbReference>
<dbReference type="GO" id="GO:0007424">
    <property type="term" value="P:open tracheal system development"/>
    <property type="evidence" value="ECO:0000315"/>
    <property type="project" value="UniProtKB"/>
</dbReference>
<dbReference type="GO" id="GO:0045944">
    <property type="term" value="P:positive regulation of transcription by RNA polymerase II"/>
    <property type="evidence" value="ECO:0000315"/>
    <property type="project" value="FlyBase"/>
</dbReference>
<dbReference type="GO" id="GO:0006357">
    <property type="term" value="P:regulation of transcription by RNA polymerase II"/>
    <property type="evidence" value="ECO:0000318"/>
    <property type="project" value="GO_Central"/>
</dbReference>
<dbReference type="GO" id="GO:0007431">
    <property type="term" value="P:salivary gland development"/>
    <property type="evidence" value="ECO:0000315"/>
    <property type="project" value="UniProtKB"/>
</dbReference>
<dbReference type="GO" id="GO:0007435">
    <property type="term" value="P:salivary gland morphogenesis"/>
    <property type="evidence" value="ECO:0000315"/>
    <property type="project" value="FlyBase"/>
</dbReference>
<dbReference type="GO" id="GO:0035277">
    <property type="term" value="P:spiracle morphogenesis, open tracheal system"/>
    <property type="evidence" value="ECO:0000315"/>
    <property type="project" value="FlyBase"/>
</dbReference>
<dbReference type="GO" id="GO:0035202">
    <property type="term" value="P:tracheal pit formation in open tracheal system"/>
    <property type="evidence" value="ECO:0000315"/>
    <property type="project" value="FlyBase"/>
</dbReference>
<dbReference type="CDD" id="cd19733">
    <property type="entry name" value="bHLH-PAS_trachealess_like"/>
    <property type="match status" value="1"/>
</dbReference>
<dbReference type="CDD" id="cd00130">
    <property type="entry name" value="PAS"/>
    <property type="match status" value="2"/>
</dbReference>
<dbReference type="FunFam" id="4.10.280.10:FF:000007">
    <property type="entry name" value="single-minded homolog 1 isoform X1"/>
    <property type="match status" value="1"/>
</dbReference>
<dbReference type="FunFam" id="3.30.450.20:FF:000054">
    <property type="entry name" value="Trachealess, isoform D"/>
    <property type="match status" value="1"/>
</dbReference>
<dbReference type="FunFam" id="3.30.450.20:FF:000089">
    <property type="entry name" value="Trachealess, isoform E"/>
    <property type="match status" value="1"/>
</dbReference>
<dbReference type="Gene3D" id="4.10.280.10">
    <property type="entry name" value="Helix-loop-helix DNA-binding domain"/>
    <property type="match status" value="1"/>
</dbReference>
<dbReference type="Gene3D" id="3.30.450.20">
    <property type="entry name" value="PAS domain"/>
    <property type="match status" value="2"/>
</dbReference>
<dbReference type="InterPro" id="IPR011598">
    <property type="entry name" value="bHLH_dom"/>
</dbReference>
<dbReference type="InterPro" id="IPR036638">
    <property type="entry name" value="HLH_DNA-bd_sf"/>
</dbReference>
<dbReference type="InterPro" id="IPR001610">
    <property type="entry name" value="PAC"/>
</dbReference>
<dbReference type="InterPro" id="IPR000014">
    <property type="entry name" value="PAS"/>
</dbReference>
<dbReference type="InterPro" id="IPR035965">
    <property type="entry name" value="PAS-like_dom_sf"/>
</dbReference>
<dbReference type="InterPro" id="IPR013767">
    <property type="entry name" value="PAS_fold"/>
</dbReference>
<dbReference type="InterPro" id="IPR013655">
    <property type="entry name" value="PAS_fold_3"/>
</dbReference>
<dbReference type="PANTHER" id="PTHR23043">
    <property type="entry name" value="HYPOXIA-INDUCIBLE FACTOR 1 ALPHA"/>
    <property type="match status" value="1"/>
</dbReference>
<dbReference type="PANTHER" id="PTHR23043:SF26">
    <property type="entry name" value="PROTEIN TRACHEALESS"/>
    <property type="match status" value="1"/>
</dbReference>
<dbReference type="Pfam" id="PF23171">
    <property type="entry name" value="bHLH_HIF1A"/>
    <property type="match status" value="1"/>
</dbReference>
<dbReference type="Pfam" id="PF00989">
    <property type="entry name" value="PAS"/>
    <property type="match status" value="1"/>
</dbReference>
<dbReference type="Pfam" id="PF08447">
    <property type="entry name" value="PAS_3"/>
    <property type="match status" value="1"/>
</dbReference>
<dbReference type="SMART" id="SM00353">
    <property type="entry name" value="HLH"/>
    <property type="match status" value="1"/>
</dbReference>
<dbReference type="SMART" id="SM00086">
    <property type="entry name" value="PAC"/>
    <property type="match status" value="1"/>
</dbReference>
<dbReference type="SMART" id="SM00091">
    <property type="entry name" value="PAS"/>
    <property type="match status" value="2"/>
</dbReference>
<dbReference type="SUPFAM" id="SSF47459">
    <property type="entry name" value="HLH, helix-loop-helix DNA-binding domain"/>
    <property type="match status" value="1"/>
</dbReference>
<dbReference type="SUPFAM" id="SSF55785">
    <property type="entry name" value="PYP-like sensor domain (PAS domain)"/>
    <property type="match status" value="2"/>
</dbReference>
<dbReference type="PROSITE" id="PS50888">
    <property type="entry name" value="BHLH"/>
    <property type="match status" value="1"/>
</dbReference>
<dbReference type="PROSITE" id="PS50112">
    <property type="entry name" value="PAS"/>
    <property type="match status" value="2"/>
</dbReference>
<organism>
    <name type="scientific">Drosophila melanogaster</name>
    <name type="common">Fruit fly</name>
    <dbReference type="NCBI Taxonomy" id="7227"/>
    <lineage>
        <taxon>Eukaryota</taxon>
        <taxon>Metazoa</taxon>
        <taxon>Ecdysozoa</taxon>
        <taxon>Arthropoda</taxon>
        <taxon>Hexapoda</taxon>
        <taxon>Insecta</taxon>
        <taxon>Pterygota</taxon>
        <taxon>Neoptera</taxon>
        <taxon>Endopterygota</taxon>
        <taxon>Diptera</taxon>
        <taxon>Brachycera</taxon>
        <taxon>Muscomorpha</taxon>
        <taxon>Ephydroidea</taxon>
        <taxon>Drosophilidae</taxon>
        <taxon>Drosophila</taxon>
        <taxon>Sophophora</taxon>
    </lineage>
</organism>
<sequence length="1022" mass="109260">MLPYQAAVAMDYAGYQRQPTPGHPGSHMATMGSLGMPAVPFTHSWMVPTQDLCAMPPYNKMTGHQQPPGAGMHAQQQPLEPGILELRKEKSRDAARSRRGKENYEFYELAKMLPLPAAITSQLDKASIIRLTISYLKLRDFSGHGDPPWTREASSSSKLKSAAIRRSPAVDLFEQHQGTHILQSLDGFALAVAADGRFLYISETVSIYLGLSQVEMTGSSIFDYIHQADHSEIADQLGLSLTSGGGGGGGSSSSGGGGGGAGGGMASPTSGASDDGSGTHGTNNPDVAASMTQASTSGYKGYDRSFCVRMKSTLTKRGCHFKSSGYRASDATSNCNNGNNASNNAKNVKNPGSNYSVVLLLCKLRPQYTFSHSRKSQPPLLGMVALAIALPPPSVHEIRLECDMFVTRVNFDLRVAHCEPRVSDLLDYSPEDLVNKSLYSLCHAEDANRLRKSHSDLIEKGQVLTGYYRLMNKSGGYTWLQTCATVVCSTKNADEQNIICVNYVISNRENENMILDCCQLEPSPDSIKHEEGLGNDKSSGSPGGDASGEGNSHLSAGDMKLNSPKTDSEGHSHRGRGRSAAASHGSSMNSLTMIKDSPTPLGVEIDSGVLPTTVATPVPAATPPVQSTKRKRKTKASQHAEDQGQEQVISEQPLPKLPTMEQRDQQPRSRLPSIVDEQPSSAADSAVKDLEQAMSKHLPSPAAVVSVAPPNTDFSADSLLKQQQQQQQLDPNEKSSTIQWIGTPYQQPPAPMPATALLRQLYANRESVIRATARQTPTGVGPGVFYGDQQTGPLPTPPGSESSYENQYLQLHSAASGGHPGGQKTSADAFTNLVSTYGGYHSSIDYHNAMTPPSSVSPRDSNQPGKAAPVLASNGGYDYAPDPLRGQYATSSGDVVPATLPLKPQASYTATMHPSGSTTTEGGVTYSNLDQPQYFAPHSSFHLYHKGSPASGWYSTPSXVVDDQGQVPPSCQDQYHHHHHHHHHQDGSAGSSASQASERWDFVGALGKVARMFFSARKGNPG</sequence>